<proteinExistence type="inferred from homology"/>
<name>DEPOL_BPK74</name>
<organism>
    <name type="scientific">Klebsiella phage vB_KpnP_KpV74</name>
    <name type="common">Bacteriophage vB_KpnP_KpV74</name>
    <dbReference type="NCBI Taxonomy" id="1933773"/>
    <lineage>
        <taxon>Viruses</taxon>
        <taxon>Duplodnaviria</taxon>
        <taxon>Heunggongvirae</taxon>
        <taxon>Uroviricota</taxon>
        <taxon>Caudoviricetes</taxon>
        <taxon>Autographiviridae</taxon>
        <taxon>Slopekvirinae</taxon>
        <taxon>Drulisvirus</taxon>
        <taxon>Drulisvirus KpV74</taxon>
    </lineage>
</organism>
<reference key="1">
    <citation type="journal article" date="2018" name="Virus Res.">
        <title>Comparative genome analysis of novel Podoviruses lytic for hypermucoviscous Klebsiella pneumoniae of K1, K2, and K57 capsular types.</title>
        <authorList>
            <person name="Solovieva E.V."/>
            <person name="Myakinina V.P."/>
            <person name="Kislichkina A.A."/>
            <person name="Krasilnikova V.M."/>
            <person name="Verevkin V.V."/>
            <person name="Mochalov V.V."/>
            <person name="Lev A.I."/>
            <person name="Fursova N.K."/>
            <person name="Volozhantsev N.V."/>
        </authorList>
    </citation>
    <scope>NUCLEOTIDE SEQUENCE [LARGE SCALE GENOMIC DNA]</scope>
    <scope>FUNCTION</scope>
</reference>
<reference key="2">
    <citation type="journal article" date="2019" name="Front. Microbiol.">
        <title>Modeling the Architecture of Depolymerase-Containing Receptor Binding Proteins in Klebsiella Phages.</title>
        <authorList>
            <person name="Latka A."/>
            <person name="Leiman P.G."/>
            <person name="Drulis-Kawa Z."/>
            <person name="Briers Y."/>
        </authorList>
    </citation>
    <scope>REVIEW</scope>
</reference>
<protein>
    <recommendedName>
        <fullName evidence="4">Depolymerase, capsule K2-specific</fullName>
    </recommendedName>
    <alternativeName>
        <fullName evidence="3">Dep_kpv74</fullName>
    </alternativeName>
    <alternativeName>
        <fullName evidence="4">Gene product 56</fullName>
        <shortName evidence="4">gp56</shortName>
    </alternativeName>
    <alternativeName>
        <fullName evidence="4">Probable tail spike protein</fullName>
    </alternativeName>
</protein>
<keyword id="KW-1238">Degradation of host capsule during virus entry</keyword>
<keyword id="KW-1235">Degradation of host cell envelope components during virus entry</keyword>
<keyword id="KW-0945">Host-virus interaction</keyword>
<keyword id="KW-1233">Viral attachment to host adhesion receptor</keyword>
<keyword id="KW-1161">Viral attachment to host cell</keyword>
<keyword id="KW-1227">Viral tail protein</keyword>
<keyword id="KW-0946">Virion</keyword>
<keyword id="KW-1160">Virus entry into host cell</keyword>
<sequence>MALVDLVRAGGYSIEYPQFSSMAKLKEFPHSEDGKLVRLLSWHEGVGLGGGLFKVSTSSTATGNDGTVVVASNGVRLLRVVNGPIWADMFGALPNSDIDSMPAVAAAYAYAASVNTDLYIGVATYKFKGSTPINIDPSRAGIIGYQGKVRIDCSEFTGSIVFSINSSYSYTPAAYYNNLSPALQGLYVLGAKTSGVDGLLVGRETVGADKSYNGQTEIRECTFDKFDRNIRMGHNSWRFVFYKVNSLNALSPNGILYVPAGLDDSGEILSFYHCQFFDGAGSNIRLSCSSYTMVFNTCSFLNITFFVDSASSATVTCNGCNFENPGSASTRRYVDISAGHTNVFNIIGGSIVTNSNPGQTQALLYVSTNNLLNLVGVTVPYGGHYQQEQELGYHAFIGGAGTVTASGVMLQLRNGAGTCPLHSSLSTFSNWDFGYGNLNAWTVDKGAGTSSVVEYLANAGPKGTGGAMRVAPVSVGTNVSQVQAVTNPGMFSMSCMVNIATTSGNAGQISIGFLDAAGNSIPGGVSANLGTTTGWKVIGKNTLRGKVPIGAKQIRVNVQTVAGADVKYAYLLCNVVK</sequence>
<feature type="chain" id="PRO_0000458729" description="Depolymerase, capsule K2-specific">
    <location>
        <begin position="1"/>
        <end position="577"/>
    </location>
</feature>
<dbReference type="EMBL" id="KY385423">
    <property type="protein sequence ID" value="APZ82768.1"/>
    <property type="molecule type" value="Genomic_DNA"/>
</dbReference>
<dbReference type="SMR" id="A0A1P8VW90"/>
<dbReference type="Proteomes" id="UP000226096">
    <property type="component" value="Genome"/>
</dbReference>
<dbReference type="GO" id="GO:0098015">
    <property type="term" value="C:virus tail"/>
    <property type="evidence" value="ECO:0007669"/>
    <property type="project" value="UniProtKB-KW"/>
</dbReference>
<dbReference type="GO" id="GO:0098671">
    <property type="term" value="P:adhesion receptor-mediated virion attachment to host cell"/>
    <property type="evidence" value="ECO:0007669"/>
    <property type="project" value="UniProtKB-KW"/>
</dbReference>
<dbReference type="GO" id="GO:0098994">
    <property type="term" value="P:symbiont entry into host cell via disruption of host cell envelope"/>
    <property type="evidence" value="ECO:0007669"/>
    <property type="project" value="UniProtKB-KW"/>
</dbReference>
<dbReference type="GO" id="GO:0098996">
    <property type="term" value="P:symbiont entry into host cell via disruption of host cell glycocalyx"/>
    <property type="evidence" value="ECO:0007669"/>
    <property type="project" value="UniProtKB-KW"/>
</dbReference>
<gene>
    <name evidence="6" type="ORF">kpv74_56</name>
</gene>
<comment type="function">
    <text evidence="2 5">Functions as a receptor binding protein (RBP) and mediates the attachment to the host capsular exopolysaccharides (Probable). Displays a depolymerase activity that specifically degrades the K2-type polysaccharides of Klebsiella pneumoniae capsule (PubMed:28988127).</text>
</comment>
<comment type="subunit">
    <text evidence="1">Homotrimer.</text>
</comment>
<comment type="subcellular location">
    <subcellularLocation>
        <location evidence="4">Virion</location>
    </subcellularLocation>
    <text evidence="4">Tail appendage.</text>
</comment>
<comment type="similarity">
    <text evidence="4">Belongs to the K2-specific depolymerase family.</text>
</comment>
<organismHost>
    <name type="scientific">Klebsiella pneumoniae</name>
    <dbReference type="NCBI Taxonomy" id="573"/>
</organismHost>
<accession>A0A1P8VW90</accession>
<evidence type="ECO:0000250" key="1">
    <source>
        <dbReference type="UniProtKB" id="A0A068Q5Q5"/>
    </source>
</evidence>
<evidence type="ECO:0000269" key="2">
    <source>
    </source>
</evidence>
<evidence type="ECO:0000303" key="3">
    <source>
    </source>
</evidence>
<evidence type="ECO:0000305" key="4"/>
<evidence type="ECO:0000305" key="5">
    <source>
    </source>
</evidence>
<evidence type="ECO:0000312" key="6">
    <source>
        <dbReference type="EMBL" id="APZ82768.1"/>
    </source>
</evidence>